<sequence length="277" mass="32387">MKLNEKLYAFFSEHVEQMAEEWIETMEESDPNSLYALHNATVTEELKEQDREFYRHLNYMYVLPEKQFLEEFQEWVIELTNDQKHLDTPVQYVIREFMRNRRLYTKYFEKFAEENESAFEPGEKQKWADLIVKVFDFTIYTFVDHAEMNAKQQLNAQREMILELSSPVITLSKSTALLPLVGDIDTERAKFILENTLQACAKRRVEHLLIDLSGVVVVDTMVAHQIFKLIEALNLIGVRSTLSGIRPEIAQTAVQLGIDFSNITIKTNLAQALNYHQ</sequence>
<evidence type="ECO:0000255" key="1">
    <source>
        <dbReference type="PROSITE-ProRule" id="PRU00198"/>
    </source>
</evidence>
<evidence type="ECO:0000269" key="2">
    <source>
    </source>
</evidence>
<evidence type="ECO:0000269" key="3">
    <source>
    </source>
</evidence>
<evidence type="ECO:0000269" key="4">
    <source>
    </source>
</evidence>
<reference key="1">
    <citation type="submission" date="1997-11" db="EMBL/GenBank/DDBJ databases">
        <title>Sequence of the Bacillus subtilis genome between xlyA and ykoR.</title>
        <authorList>
            <person name="Devine K.M."/>
        </authorList>
    </citation>
    <scope>NUCLEOTIDE SEQUENCE [GENOMIC DNA]</scope>
    <source>
        <strain>168</strain>
    </source>
</reference>
<reference key="2">
    <citation type="journal article" date="1997" name="Nature">
        <title>The complete genome sequence of the Gram-positive bacterium Bacillus subtilis.</title>
        <authorList>
            <person name="Kunst F."/>
            <person name="Ogasawara N."/>
            <person name="Moszer I."/>
            <person name="Albertini A.M."/>
            <person name="Alloni G."/>
            <person name="Azevedo V."/>
            <person name="Bertero M.G."/>
            <person name="Bessieres P."/>
            <person name="Bolotin A."/>
            <person name="Borchert S."/>
            <person name="Borriss R."/>
            <person name="Boursier L."/>
            <person name="Brans A."/>
            <person name="Braun M."/>
            <person name="Brignell S.C."/>
            <person name="Bron S."/>
            <person name="Brouillet S."/>
            <person name="Bruschi C.V."/>
            <person name="Caldwell B."/>
            <person name="Capuano V."/>
            <person name="Carter N.M."/>
            <person name="Choi S.-K."/>
            <person name="Codani J.-J."/>
            <person name="Connerton I.F."/>
            <person name="Cummings N.J."/>
            <person name="Daniel R.A."/>
            <person name="Denizot F."/>
            <person name="Devine K.M."/>
            <person name="Duesterhoeft A."/>
            <person name="Ehrlich S.D."/>
            <person name="Emmerson P.T."/>
            <person name="Entian K.-D."/>
            <person name="Errington J."/>
            <person name="Fabret C."/>
            <person name="Ferrari E."/>
            <person name="Foulger D."/>
            <person name="Fritz C."/>
            <person name="Fujita M."/>
            <person name="Fujita Y."/>
            <person name="Fuma S."/>
            <person name="Galizzi A."/>
            <person name="Galleron N."/>
            <person name="Ghim S.-Y."/>
            <person name="Glaser P."/>
            <person name="Goffeau A."/>
            <person name="Golightly E.J."/>
            <person name="Grandi G."/>
            <person name="Guiseppi G."/>
            <person name="Guy B.J."/>
            <person name="Haga K."/>
            <person name="Haiech J."/>
            <person name="Harwood C.R."/>
            <person name="Henaut A."/>
            <person name="Hilbert H."/>
            <person name="Holsappel S."/>
            <person name="Hosono S."/>
            <person name="Hullo M.-F."/>
            <person name="Itaya M."/>
            <person name="Jones L.-M."/>
            <person name="Joris B."/>
            <person name="Karamata D."/>
            <person name="Kasahara Y."/>
            <person name="Klaerr-Blanchard M."/>
            <person name="Klein C."/>
            <person name="Kobayashi Y."/>
            <person name="Koetter P."/>
            <person name="Koningstein G."/>
            <person name="Krogh S."/>
            <person name="Kumano M."/>
            <person name="Kurita K."/>
            <person name="Lapidus A."/>
            <person name="Lardinois S."/>
            <person name="Lauber J."/>
            <person name="Lazarevic V."/>
            <person name="Lee S.-M."/>
            <person name="Levine A."/>
            <person name="Liu H."/>
            <person name="Masuda S."/>
            <person name="Mauel C."/>
            <person name="Medigue C."/>
            <person name="Medina N."/>
            <person name="Mellado R.P."/>
            <person name="Mizuno M."/>
            <person name="Moestl D."/>
            <person name="Nakai S."/>
            <person name="Noback M."/>
            <person name="Noone D."/>
            <person name="O'Reilly M."/>
            <person name="Ogawa K."/>
            <person name="Ogiwara A."/>
            <person name="Oudega B."/>
            <person name="Park S.-H."/>
            <person name="Parro V."/>
            <person name="Pohl T.M."/>
            <person name="Portetelle D."/>
            <person name="Porwollik S."/>
            <person name="Prescott A.M."/>
            <person name="Presecan E."/>
            <person name="Pujic P."/>
            <person name="Purnelle B."/>
            <person name="Rapoport G."/>
            <person name="Rey M."/>
            <person name="Reynolds S."/>
            <person name="Rieger M."/>
            <person name="Rivolta C."/>
            <person name="Rocha E."/>
            <person name="Roche B."/>
            <person name="Rose M."/>
            <person name="Sadaie Y."/>
            <person name="Sato T."/>
            <person name="Scanlan E."/>
            <person name="Schleich S."/>
            <person name="Schroeter R."/>
            <person name="Scoffone F."/>
            <person name="Sekiguchi J."/>
            <person name="Sekowska A."/>
            <person name="Seror S.J."/>
            <person name="Serror P."/>
            <person name="Shin B.-S."/>
            <person name="Soldo B."/>
            <person name="Sorokin A."/>
            <person name="Tacconi E."/>
            <person name="Takagi T."/>
            <person name="Takahashi H."/>
            <person name="Takemaru K."/>
            <person name="Takeuchi M."/>
            <person name="Tamakoshi A."/>
            <person name="Tanaka T."/>
            <person name="Terpstra P."/>
            <person name="Tognoni A."/>
            <person name="Tosato V."/>
            <person name="Uchiyama S."/>
            <person name="Vandenbol M."/>
            <person name="Vannier F."/>
            <person name="Vassarotti A."/>
            <person name="Viari A."/>
            <person name="Wambutt R."/>
            <person name="Wedler E."/>
            <person name="Wedler H."/>
            <person name="Weitzenegger T."/>
            <person name="Winters P."/>
            <person name="Wipat A."/>
            <person name="Yamamoto H."/>
            <person name="Yamane K."/>
            <person name="Yasumoto K."/>
            <person name="Yata K."/>
            <person name="Yoshida K."/>
            <person name="Yoshikawa H.-F."/>
            <person name="Zumstein E."/>
            <person name="Yoshikawa H."/>
            <person name="Danchin A."/>
        </authorList>
    </citation>
    <scope>NUCLEOTIDE SEQUENCE [LARGE SCALE GENOMIC DNA]</scope>
    <source>
        <strain>168</strain>
    </source>
</reference>
<reference key="3">
    <citation type="journal article" date="2001" name="J. Bacteriol.">
        <title>New family of regulators in the environmental signaling pathway which activates the general stress transcription factor sigma(B) of Bacillus subtilis.</title>
        <authorList>
            <person name="Akbar S."/>
            <person name="Gaidenko T.A."/>
            <person name="Kang C.M."/>
            <person name="O'Reilly M."/>
            <person name="Devine K.M."/>
            <person name="Price C.W."/>
        </authorList>
    </citation>
    <scope>FUNCTION</scope>
    <scope>PHOSPHORYLATION BY RSBT</scope>
    <scope>COMPLEX SUGGESTION</scope>
    <scope>DISRUPTION PHENOTYPE</scope>
    <source>
        <strain>168 / Marburg / ATCC 6051 / DSM 10 / JCM 1465 / NBRC 13719 / NCIMB 3610 / NRRL NRS-744 / VKM B-501</strain>
    </source>
</reference>
<reference key="4">
    <citation type="journal article" date="2004" name="J. Mol. Biol.">
        <title>A multicomponent protein complex mediates environmental stress signaling in Bacillus subtilis.</title>
        <authorList>
            <person name="Kim T.-J."/>
            <person name="Gaidenko T.A."/>
            <person name="Price C.W."/>
        </authorList>
    </citation>
    <scope>FUNCTION</scope>
    <scope>SUBUNIT</scope>
    <scope>MUTAGENESIS OF THR-186 AND THR-220</scope>
    <source>
        <strain>168 / Marburg / ATCC 6051 / DSM 10 / JCM 1465 / NBRC 13719 / NCIMB 3610 / NRRL NRS-744 / VKM B-501</strain>
    </source>
</reference>
<reference key="5">
    <citation type="journal article" date="2007" name="Mol. Cell. Proteomics">
        <title>The serine/threonine/tyrosine phosphoproteome of the model bacterium Bacillus subtilis.</title>
        <authorList>
            <person name="Macek B."/>
            <person name="Mijakovic I."/>
            <person name="Olsen J.V."/>
            <person name="Gnad F."/>
            <person name="Kumar C."/>
            <person name="Jensen P.R."/>
            <person name="Mann M."/>
        </authorList>
    </citation>
    <scope>PHOSPHORYLATION [LARGE SCALE ANALYSIS] AT THR-186</scope>
    <scope>IDENTIFICATION BY MASS SPECTROMETRY</scope>
    <source>
        <strain>168</strain>
    </source>
</reference>
<keyword id="KW-0597">Phosphoprotein</keyword>
<keyword id="KW-1185">Reference proteome</keyword>
<organism>
    <name type="scientific">Bacillus subtilis (strain 168)</name>
    <dbReference type="NCBI Taxonomy" id="224308"/>
    <lineage>
        <taxon>Bacteria</taxon>
        <taxon>Bacillati</taxon>
        <taxon>Bacillota</taxon>
        <taxon>Bacilli</taxon>
        <taxon>Bacillales</taxon>
        <taxon>Bacillaceae</taxon>
        <taxon>Bacillus</taxon>
    </lineage>
</organism>
<name>RSBRB_BACSU</name>
<comment type="function">
    <text>One of 4 functionally non-identical RsbR paralogs, it functions in the environmental signaling branch of the general stress response.</text>
</comment>
<comment type="function">
    <text>Negative regulator of sigma-B activity. Non-phosphorylated RsbS binds to RsbT, preventing its association with RsbU. Requires any one of RsbRA, RsbRB, RsbRC or RsbRD to sequester RsbT. When RsbS and the RsbR paralog(s) are phosphorylated, they release RsbT, which can then bind and activate RsbU.</text>
</comment>
<comment type="subunit">
    <text evidence="3">Interacts with RsbRA and RsbS in the stressosome. The stressosome probably also contains RsbRC and RsbRD.</text>
</comment>
<comment type="PTM">
    <text evidence="2 4">Phosphorylated by RsbT.</text>
</comment>
<comment type="disruption phenotype">
    <text evidence="2">Cells lacking this gene have an increased sigma-B activity in response to salt and ethanol stress and also increased sigma-B activity in response to the energy stress associated with entry into stationary phase. These results indicate that this protein is a negative regulator of sigma-B activity.</text>
</comment>
<accession>O34860</accession>
<accession>Q796M1</accession>
<feature type="chain" id="PRO_0000361685" description="RsbT co-antagonist protein RsbRB">
    <location>
        <begin position="1"/>
        <end position="277"/>
    </location>
</feature>
<feature type="domain" description="STAS" evidence="1">
    <location>
        <begin position="165"/>
        <end position="276"/>
    </location>
</feature>
<feature type="modified residue" description="Phosphothreonine" evidence="4">
    <location>
        <position position="186"/>
    </location>
</feature>
<feature type="mutagenesis site" description="In absence of the other RsbR paralogs decreased stress response." evidence="3">
    <original>T</original>
    <variation>A</variation>
    <location>
        <position position="186"/>
    </location>
</feature>
<feature type="mutagenesis site" description="In absence of the other RsbR paralogs small decrease in stress response." evidence="3">
    <original>T</original>
    <variation>D</variation>
    <location>
        <position position="186"/>
    </location>
</feature>
<feature type="mutagenesis site" description="In absence of the other RsbR paralogs no change in stress response." evidence="3">
    <original>T</original>
    <variation>A</variation>
    <location>
        <position position="220"/>
    </location>
</feature>
<feature type="mutagenesis site" description="In absence of the other RsbR paralogs small decrease in stress response." evidence="3">
    <original>T</original>
    <variation>D</variation>
    <location>
        <position position="220"/>
    </location>
</feature>
<protein>
    <recommendedName>
        <fullName>RsbT co-antagonist protein RsbRB</fullName>
    </recommendedName>
    <alternativeName>
        <fullName>Stressosome protein RsbRB</fullName>
    </alternativeName>
</protein>
<proteinExistence type="evidence at protein level"/>
<gene>
    <name type="primary">rsbRB</name>
    <name type="synonym">ykoB</name>
    <name type="ordered locus">BSU13200</name>
</gene>
<dbReference type="EMBL" id="AJ002571">
    <property type="protein sequence ID" value="CAA05599.1"/>
    <property type="molecule type" value="Genomic_DNA"/>
</dbReference>
<dbReference type="EMBL" id="AL009126">
    <property type="protein sequence ID" value="CAB13177.1"/>
    <property type="molecule type" value="Genomic_DNA"/>
</dbReference>
<dbReference type="PIR" id="G69646">
    <property type="entry name" value="G69646"/>
</dbReference>
<dbReference type="RefSeq" id="NP_389203.1">
    <property type="nucleotide sequence ID" value="NC_000964.3"/>
</dbReference>
<dbReference type="RefSeq" id="WP_003232560.1">
    <property type="nucleotide sequence ID" value="NZ_OZ025638.1"/>
</dbReference>
<dbReference type="SMR" id="O34860"/>
<dbReference type="FunCoup" id="O34860">
    <property type="interactions" value="15"/>
</dbReference>
<dbReference type="STRING" id="224308.BSU13200"/>
<dbReference type="iPTMnet" id="O34860"/>
<dbReference type="jPOST" id="O34860"/>
<dbReference type="PaxDb" id="224308-BSU13200"/>
<dbReference type="EnsemblBacteria" id="CAB13177">
    <property type="protein sequence ID" value="CAB13177"/>
    <property type="gene ID" value="BSU_13200"/>
</dbReference>
<dbReference type="GeneID" id="938160"/>
<dbReference type="KEGG" id="bsu:BSU13200"/>
<dbReference type="PATRIC" id="fig|224308.179.peg.1434"/>
<dbReference type="eggNOG" id="COG1366">
    <property type="taxonomic scope" value="Bacteria"/>
</dbReference>
<dbReference type="InParanoid" id="O34860"/>
<dbReference type="OrthoDB" id="9800154at2"/>
<dbReference type="PhylomeDB" id="O34860"/>
<dbReference type="BioCyc" id="BSUB:BSU13200-MONOMER"/>
<dbReference type="Proteomes" id="UP000001570">
    <property type="component" value="Chromosome"/>
</dbReference>
<dbReference type="CDD" id="cd07041">
    <property type="entry name" value="STAS_RsbR_RsbS_like"/>
    <property type="match status" value="1"/>
</dbReference>
<dbReference type="Gene3D" id="3.30.750.24">
    <property type="entry name" value="STAS domain"/>
    <property type="match status" value="1"/>
</dbReference>
<dbReference type="InterPro" id="IPR051932">
    <property type="entry name" value="Bact_StressResp_Reg"/>
</dbReference>
<dbReference type="InterPro" id="IPR002645">
    <property type="entry name" value="STAS_dom"/>
</dbReference>
<dbReference type="InterPro" id="IPR036513">
    <property type="entry name" value="STAS_dom_sf"/>
</dbReference>
<dbReference type="PANTHER" id="PTHR33745">
    <property type="entry name" value="RSBT ANTAGONIST PROTEIN RSBS-RELATED"/>
    <property type="match status" value="1"/>
</dbReference>
<dbReference type="PANTHER" id="PTHR33745:SF3">
    <property type="entry name" value="RSBT CO-ANTAGONIST PROTEIN RSBRC"/>
    <property type="match status" value="1"/>
</dbReference>
<dbReference type="Pfam" id="PF01740">
    <property type="entry name" value="STAS"/>
    <property type="match status" value="1"/>
</dbReference>
<dbReference type="SUPFAM" id="SSF52091">
    <property type="entry name" value="SpoIIaa-like"/>
    <property type="match status" value="1"/>
</dbReference>
<dbReference type="PROSITE" id="PS50801">
    <property type="entry name" value="STAS"/>
    <property type="match status" value="1"/>
</dbReference>